<sequence>MSVSGLKAELKFLASIFDKNHERFRIVSWKLDELHCQFLVPPPAPPLLTLHCNITESYPSSSPIWFVDSDDPNLTSVLERLEDSKNNNSLRQQLKWLICELCRLYNLPKHLDVEMLDQPLPTGQNGTTEEVTSEEEEEEEMAEDIEDLDHYEMKEEEPINGRKSEDEGIEKENLAILEKIRKSQRQDHLNGAVSGSVQASDRLMKELRDIYRSQSYKTGIYSVELINDSLYDWHVKLQKVDPDSPLHSDLQILKEKEGIEYILLNFSFKDNFPFDPPFVRVVLPVLSGGYVLGGGALCMELLTKQGWSSAYSIESVIMQINATLVKGKARVQFGANKNQYNLARAQQSYNSIVQIHEKNGWYTPPKEDG</sequence>
<keyword id="KW-0067">ATP-binding</keyword>
<keyword id="KW-0963">Cytoplasm</keyword>
<keyword id="KW-0547">Nucleotide-binding</keyword>
<keyword id="KW-1185">Reference proteome</keyword>
<keyword id="KW-0808">Transferase</keyword>
<keyword id="KW-0832">Ubl conjugation</keyword>
<keyword id="KW-0833">Ubl conjugation pathway</keyword>
<accession>Q7YQJ9</accession>
<dbReference type="EC" id="2.3.2.23"/>
<dbReference type="EMBL" id="AY330351">
    <property type="protein sequence ID" value="AAP93920.1"/>
    <property type="molecule type" value="mRNA"/>
</dbReference>
<dbReference type="RefSeq" id="NP_001076163.1">
    <property type="nucleotide sequence ID" value="NM_001082694.1"/>
</dbReference>
<dbReference type="SMR" id="Q7YQJ9"/>
<dbReference type="FunCoup" id="Q7YQJ9">
    <property type="interactions" value="2299"/>
</dbReference>
<dbReference type="STRING" id="9986.ENSOCUP00000033962"/>
<dbReference type="PaxDb" id="9986-ENSOCUP00000021489"/>
<dbReference type="Ensembl" id="ENSOCUT00000029964.3">
    <property type="protein sequence ID" value="ENSOCUP00000021489.1"/>
    <property type="gene ID" value="ENSOCUG00000022720.3"/>
</dbReference>
<dbReference type="GeneID" id="100009425"/>
<dbReference type="KEGG" id="ocu:100009425"/>
<dbReference type="CTD" id="92912"/>
<dbReference type="eggNOG" id="KOG0897">
    <property type="taxonomic scope" value="Eukaryota"/>
</dbReference>
<dbReference type="GeneTree" id="ENSGT00940000155357"/>
<dbReference type="HOGENOM" id="CLU_053863_0_0_1"/>
<dbReference type="InParanoid" id="Q7YQJ9"/>
<dbReference type="OMA" id="KWLICDL"/>
<dbReference type="OrthoDB" id="109543at2759"/>
<dbReference type="TreeFam" id="TF313338"/>
<dbReference type="UniPathway" id="UPA00143"/>
<dbReference type="Proteomes" id="UP000001811">
    <property type="component" value="Unplaced"/>
</dbReference>
<dbReference type="Bgee" id="ENSOCUG00000022720">
    <property type="expression patterns" value="Expressed in left lung and 15 other cell types or tissues"/>
</dbReference>
<dbReference type="GO" id="GO:0005737">
    <property type="term" value="C:cytoplasm"/>
    <property type="evidence" value="ECO:0007669"/>
    <property type="project" value="UniProtKB-SubCell"/>
</dbReference>
<dbReference type="GO" id="GO:0005524">
    <property type="term" value="F:ATP binding"/>
    <property type="evidence" value="ECO:0007669"/>
    <property type="project" value="UniProtKB-KW"/>
</dbReference>
<dbReference type="GO" id="GO:0061631">
    <property type="term" value="F:ubiquitin conjugating enzyme activity"/>
    <property type="evidence" value="ECO:0007669"/>
    <property type="project" value="UniProtKB-EC"/>
</dbReference>
<dbReference type="GO" id="GO:0004842">
    <property type="term" value="F:ubiquitin-protein transferase activity"/>
    <property type="evidence" value="ECO:0000250"/>
    <property type="project" value="UniProtKB"/>
</dbReference>
<dbReference type="GO" id="GO:0070936">
    <property type="term" value="P:protein K48-linked ubiquitination"/>
    <property type="evidence" value="ECO:0000250"/>
    <property type="project" value="UniProtKB"/>
</dbReference>
<dbReference type="CDD" id="cd23802">
    <property type="entry name" value="UBCc_UBE2Q"/>
    <property type="match status" value="1"/>
</dbReference>
<dbReference type="FunFam" id="3.10.110.10:FF:000006">
    <property type="entry name" value="Ubiquitin-conjugating enzyme E2 Q2"/>
    <property type="match status" value="1"/>
</dbReference>
<dbReference type="FunFam" id="3.10.110.10:FF:000055">
    <property type="entry name" value="ubiquitin-conjugating enzyme E2 Q2 isoform X2"/>
    <property type="match status" value="1"/>
</dbReference>
<dbReference type="Gene3D" id="3.10.110.10">
    <property type="entry name" value="Ubiquitin Conjugating Enzyme"/>
    <property type="match status" value="1"/>
</dbReference>
<dbReference type="InterPro" id="IPR050113">
    <property type="entry name" value="Ub_conjugating_enzyme"/>
</dbReference>
<dbReference type="InterPro" id="IPR000608">
    <property type="entry name" value="UBQ-conjugat_E2_core"/>
</dbReference>
<dbReference type="InterPro" id="IPR016135">
    <property type="entry name" value="UBQ-conjugating_enzyme/RWD"/>
</dbReference>
<dbReference type="PANTHER" id="PTHR24067">
    <property type="entry name" value="UBIQUITIN-CONJUGATING ENZYME E2"/>
    <property type="match status" value="1"/>
</dbReference>
<dbReference type="Pfam" id="PF00179">
    <property type="entry name" value="UQ_con"/>
    <property type="match status" value="1"/>
</dbReference>
<dbReference type="SMART" id="SM00212">
    <property type="entry name" value="UBCc"/>
    <property type="match status" value="1"/>
</dbReference>
<dbReference type="SUPFAM" id="SSF54495">
    <property type="entry name" value="UBC-like"/>
    <property type="match status" value="2"/>
</dbReference>
<dbReference type="PROSITE" id="PS50127">
    <property type="entry name" value="UBC_2"/>
    <property type="match status" value="1"/>
</dbReference>
<reference key="1">
    <citation type="journal article" date="2004" name="Biol. Reprod.">
        <title>Differential expression of genes in the endometrium at implantation: upregulation of a novel member of the E2 class of ubiquitin-conjugating enzymes.</title>
        <authorList>
            <person name="Melner M.H."/>
            <person name="Ducharme N.A."/>
            <person name="Brash A.R."/>
            <person name="Winfrey V.P."/>
            <person name="Olson G.E."/>
        </authorList>
    </citation>
    <scope>NUCLEOTIDE SEQUENCE [MRNA]</scope>
    <scope>TISSUE SPECIFICITY</scope>
    <source>
        <tissue>Endometrium</tissue>
    </source>
</reference>
<organism>
    <name type="scientific">Oryctolagus cuniculus</name>
    <name type="common">Rabbit</name>
    <dbReference type="NCBI Taxonomy" id="9986"/>
    <lineage>
        <taxon>Eukaryota</taxon>
        <taxon>Metazoa</taxon>
        <taxon>Chordata</taxon>
        <taxon>Craniata</taxon>
        <taxon>Vertebrata</taxon>
        <taxon>Euteleostomi</taxon>
        <taxon>Mammalia</taxon>
        <taxon>Eutheria</taxon>
        <taxon>Euarchontoglires</taxon>
        <taxon>Glires</taxon>
        <taxon>Lagomorpha</taxon>
        <taxon>Leporidae</taxon>
        <taxon>Oryctolagus</taxon>
    </lineage>
</organism>
<protein>
    <recommendedName>
        <fullName>Ubiquitin-conjugating enzyme E2 Q2</fullName>
        <ecNumber>2.3.2.23</ecNumber>
    </recommendedName>
    <alternativeName>
        <fullName>E2 ubiquitin-conjugating enzyme Q2</fullName>
    </alternativeName>
    <alternativeName>
        <fullName>Ubiquitin carrier protein Q2</fullName>
    </alternativeName>
    <alternativeName>
        <fullName>Ubiquitin-conjugating enzyme UBCi</fullName>
    </alternativeName>
    <alternativeName>
        <fullName>Ubiquitin-protein ligase Q2</fullName>
    </alternativeName>
</protein>
<comment type="function">
    <text evidence="1">Accepts ubiquitin from the E1 complex and catalyzes its covalent attachment to other proteins. In vitro catalyzes 'Lys-48'-linked polyubiquitination.</text>
</comment>
<comment type="catalytic activity">
    <reaction evidence="2">
        <text>S-ubiquitinyl-[E1 ubiquitin-activating enzyme]-L-cysteine + [E2 ubiquitin-conjugating enzyme]-L-cysteine = [E1 ubiquitin-activating enzyme]-L-cysteine + S-ubiquitinyl-[E2 ubiquitin-conjugating enzyme]-L-cysteine.</text>
        <dbReference type="EC" id="2.3.2.23"/>
    </reaction>
</comment>
<comment type="pathway">
    <text evidence="2">Protein modification; protein ubiquitination.</text>
</comment>
<comment type="subcellular location">
    <subcellularLocation>
        <location evidence="1">Cytoplasm</location>
    </subcellularLocation>
</comment>
<comment type="tissue specificity">
    <text evidence="4">Detected at embryo implantation sites in the luminal epithelium of pregnant endometrium. Detected at low levels in ovary and liver.</text>
</comment>
<comment type="induction">
    <text>Up-regulated in pregnant endometrium during implantation.</text>
</comment>
<comment type="PTM">
    <text evidence="1">Auto-ubiquitinated in vitro.</text>
</comment>
<comment type="similarity">
    <text evidence="2">Belongs to the ubiquitin-conjugating enzyme family.</text>
</comment>
<gene>
    <name type="primary">UBE2Q2</name>
</gene>
<feature type="chain" id="PRO_0000223881" description="Ubiquitin-conjugating enzyme E2 Q2">
    <location>
        <begin position="1"/>
        <end position="369"/>
    </location>
</feature>
<feature type="domain" description="UBC core" evidence="2">
    <location>
        <begin position="198"/>
        <end position="362"/>
    </location>
</feature>
<feature type="region of interest" description="Disordered" evidence="3">
    <location>
        <begin position="117"/>
        <end position="143"/>
    </location>
</feature>
<feature type="compositionally biased region" description="Acidic residues" evidence="3">
    <location>
        <begin position="131"/>
        <end position="143"/>
    </location>
</feature>
<feature type="active site" description="Glycyl thioester intermediate" evidence="2">
    <location>
        <position position="298"/>
    </location>
</feature>
<name>UB2Q2_RABIT</name>
<evidence type="ECO:0000250" key="1">
    <source>
        <dbReference type="UniProtKB" id="Q8WVN8"/>
    </source>
</evidence>
<evidence type="ECO:0000255" key="2">
    <source>
        <dbReference type="PROSITE-ProRule" id="PRU00388"/>
    </source>
</evidence>
<evidence type="ECO:0000256" key="3">
    <source>
        <dbReference type="SAM" id="MobiDB-lite"/>
    </source>
</evidence>
<evidence type="ECO:0000269" key="4">
    <source>
    </source>
</evidence>
<proteinExistence type="evidence at transcript level"/>